<name>PERF_MOUSE</name>
<keyword id="KW-0002">3D-structure</keyword>
<keyword id="KW-0106">Calcium</keyword>
<keyword id="KW-1003">Cell membrane</keyword>
<keyword id="KW-0204">Cytolysis</keyword>
<keyword id="KW-0903">Direct protein sequencing</keyword>
<keyword id="KW-1015">Disulfide bond</keyword>
<keyword id="KW-0245">EGF-like domain</keyword>
<keyword id="KW-0967">Endosome</keyword>
<keyword id="KW-0325">Glycoprotein</keyword>
<keyword id="KW-0458">Lysosome</keyword>
<keyword id="KW-0472">Membrane</keyword>
<keyword id="KW-0479">Metal-binding</keyword>
<keyword id="KW-1185">Reference proteome</keyword>
<keyword id="KW-0964">Secreted</keyword>
<keyword id="KW-0732">Signal</keyword>
<keyword id="KW-0812">Transmembrane</keyword>
<keyword id="KW-1134">Transmembrane beta strand</keyword>
<gene>
    <name type="primary">Prf1</name>
    <name type="synonym">Pfp</name>
</gene>
<comment type="function">
    <text evidence="1 5 7 8 11 12 13 14 15 16 17">Pore-forming protein that plays a key role in granzyme-mediated programmed cell death, and in defense against virus-infected or neoplastic cells (PubMed:19446473, PubMed:21037563, PubMed:26306037, PubMed:2783478, PubMed:3261391, PubMed:35148176, PubMed:35705808, PubMed:7520535, PubMed:7526382, PubMed:7972104, PubMed:8164737). Can insert into the membrane of target cells in its calcium-bound form, oligomerize and form large pores (PubMed:19446473, PubMed:21037563, PubMed:26306037, PubMed:3261391, PubMed:35148176, PubMed:35705808, PubMed:7526382, PubMed:8164737). Promotes cytolysis and apoptosis of target cells by mediating the passage and uptake of cytotoxic granzymes (PubMed:19446473, PubMed:21037563, PubMed:26306037, PubMed:3261391, PubMed:35148176, PubMed:7526382, PubMed:8164737). Facilitates the delivery of cationic cargo protein, while anionic or neural proteins are not delivered efficiently (By similarity). Perforin pores allow the release of mature caspase-7 (CASP7) into the extracellular milieu (PubMed:35705808).</text>
</comment>
<comment type="cofactor">
    <cofactor evidence="3 7 8 12">
        <name>Ca(2+)</name>
        <dbReference type="ChEBI" id="CHEBI:29108"/>
    </cofactor>
</comment>
<comment type="subunit">
    <text evidence="5 7 12">Monomer, as soluble protein (PubMed:19446473, PubMed:21037563). Homooligomer; homooligomerizes to form a pore-forming ring (PubMed:19446473, PubMed:21037563, PubMed:35148176).</text>
</comment>
<comment type="subcellular location">
    <subcellularLocation>
        <location evidence="6 17">Cytolytic granule</location>
    </subcellularLocation>
    <subcellularLocation>
        <location evidence="6 11">Secreted</location>
    </subcellularLocation>
    <subcellularLocation>
        <location evidence="5 7 12">Cell membrane</location>
        <topology evidence="5 7 12">Multi-pass membrane protein</topology>
    </subcellularLocation>
    <subcellularLocation>
        <location evidence="1">Endosome lumen</location>
    </subcellularLocation>
    <text evidence="1 5 6 7 17">Released from cytotoxic lymphocytes, together with proapoptotic granzymes: stored in cytolytic granules of cytolytic T-lymphocytes and secreted into the cleft between T-lymphocyte and target cell (PubMed:2040805, PubMed:8164737). May be taken up via endocytosis involving clathrin-coated vesicles and accumulate in a first time in large early endosomes (By similarity). Inserts into the cell membrane of target cells and forms pores (PubMed:19446473, PubMed:21037563). Membrane insertion and pore formation requires a major conformation change (PubMed:19446473, PubMed:21037563).</text>
</comment>
<comment type="tissue specificity">
    <text evidence="6 9 11">Detected in cytotoxic T-lymphocytes and natural killer cells.</text>
</comment>
<comment type="domain">
    <text evidence="7 8 12">Perforin consists of three domains: (1) the MACPF domain, which includes the central machinery of pore formation, (2) the EGF-like domain, which forms a 'shelf-like' assembly connecting the MACPF and C2 domains, and (3) the C2 domain, which mediates calcium-dependent binding to lipid membranes (PubMed:21037563, PubMed:35148176). The C2 domain is critical for initial calcium-dependent interaction with lipid membranes of the target cell: calcium-binding causes a significant structural rearrangement, leading to oligomerization and deployment of the two transmembrane beta-strands (named CH1/TMH1 and CH2/TMH2) that enter the membrane as amphipathic beta-hairpins (PubMed:21037563, PubMed:26306037, PubMed:35148176). The third calcium-binding site (Ca(2+) 3), which constitutes the weakest affinity site, triggers structural rearrangements in the C2 domain that facilitate its interaction with lipid membranes (PubMed:26306037).</text>
</comment>
<comment type="PTM">
    <text evidence="7">N-glycosylated. The glycosylation sites are facing the interior of the pore.</text>
</comment>
<comment type="disruption phenotype">
    <text evidence="14 15 16 17">Mice are viable and fertile, but die of virus infections that are normally efficiently dealt with by the immune system (PubMed:7520535, PubMed:7526382, PubMed:7972104, PubMed:8164737). They cannot eliminate lymphocytic choriomeningitis virus, but die of the infection (PubMed:7520535, PubMed:7526382, PubMed:7972104, PubMed:8164737). Young mice are abnormally susceptible to mouse hepatitis virus (PubMed:7520535, PubMed:7526382, PubMed:7972104, PubMed:8164737). Cytolytic activity towards tumor cells and transplants is also severely reduced (PubMed:7520535, PubMed:7526382, PubMed:7972104, PubMed:8164737).</text>
</comment>
<comment type="similarity">
    <text evidence="19">Belongs to the complement C6/C7/C8/C9 family.</text>
</comment>
<comment type="online information" name="Protein Spotlight">
    <link uri="https://www.proteinspotlight.org/back_issues/126"/>
    <text>Our hollow architecture - Issue 126 of February 2011</text>
</comment>
<protein>
    <recommendedName>
        <fullName evidence="18">Perforin-1</fullName>
        <shortName>P1</shortName>
    </recommendedName>
    <alternativeName>
        <fullName>Cytolysin</fullName>
    </alternativeName>
    <alternativeName>
        <fullName>Lymphocyte pore-forming protein</fullName>
    </alternativeName>
</protein>
<reference key="1">
    <citation type="journal article" date="1989" name="Biochem. Biophys. Res. Commun.">
        <title>The structure of the mouse lymphocyte pore-forming protein perforin.</title>
        <authorList>
            <person name="Kwon B.S."/>
            <person name="Wakulchik M."/>
            <person name="Liu C.C."/>
            <person name="Persechini P.M."/>
            <person name="Trapani J.A."/>
            <person name="Haq A.K."/>
            <person name="Kim Y."/>
            <person name="Young J.D.-E."/>
        </authorList>
    </citation>
    <scope>NUCLEOTIDE SEQUENCE [MRNA]</scope>
</reference>
<reference key="2">
    <citation type="journal article" date="1990" name="J. Exp. Med.">
        <title>Genomic organization of the mouse pore-forming protein (perforin) gene and localization to chromosome 10. Similarities to and differences from C9.</title>
        <authorList>
            <person name="Trapani J.A."/>
            <person name="Kwon B.S."/>
            <person name="Kozak C.A."/>
            <person name="Chintamaneni C."/>
            <person name="Young J.D."/>
            <person name="Dupont B."/>
        </authorList>
    </citation>
    <scope>NUCLEOTIDE SEQUENCE [GENOMIC DNA]</scope>
</reference>
<reference key="3">
    <citation type="journal article" date="1988" name="Nature">
        <title>Homology of perforin to the ninth component of complement (C9).</title>
        <authorList>
            <person name="Shinkai Y."/>
            <person name="Takio K."/>
            <person name="Okumura K."/>
        </authorList>
    </citation>
    <scope>NUCLEOTIDE SEQUENCE [MRNA]</scope>
    <scope>PROTEIN SEQUENCE OF N-TERMINUS</scope>
    <scope>FUNCTION</scope>
    <scope>SUBCELLULAR LOCATION</scope>
    <scope>TISSUE SPECIFICITY</scope>
</reference>
<reference key="4">
    <citation type="journal article" date="1989" name="Proc. Natl. Acad. Sci. U.S.A.">
        <title>Cloning, analysis, and expression of murine perforin 1 cDNA, a component of cytolytic T-cell granules with homology to complement component C9.</title>
        <authorList>
            <person name="Lowrey D.M."/>
            <person name="Aebischer Y."/>
            <person name="Olsen K."/>
            <person name="Lichtenheld M."/>
            <person name="Rupp F."/>
            <person name="Hengartner H."/>
            <person name="Podack E.R."/>
        </authorList>
    </citation>
    <scope>NUCLEOTIDE SEQUENCE [MRNA]</scope>
    <scope>TISSUE SPECIFICITY</scope>
</reference>
<reference key="5">
    <citation type="submission" date="1992-11" db="EMBL/GenBank/DDBJ databases">
        <authorList>
            <person name="Mueller C."/>
            <person name="Lowin B."/>
            <person name="Tschopp J."/>
        </authorList>
    </citation>
    <scope>NUCLEOTIDE SEQUENCE [MRNA]</scope>
    <source>
        <strain>C57BL/6J</strain>
    </source>
</reference>
<reference key="6">
    <citation type="journal article" date="1992" name="J. Immunol.">
        <title>Structure and function of the murine perforin promoter and upstream region. Reciprocal gene activation or silencing in perforin positive and negative cells.</title>
        <authorList>
            <person name="Lichtenheld M.G."/>
            <person name="Podack E.R."/>
        </authorList>
    </citation>
    <scope>NUCLEOTIDE SEQUENCE [GENOMIC DNA] OF 1-117</scope>
    <source>
        <strain>BALB/cJ</strain>
    </source>
</reference>
<reference key="7">
    <citation type="journal article" date="1988" name="Biochem. Biophys. Res. Commun.">
        <title>The primary structure of the lymphocyte pore-forming protein perforin: partial amino acid sequencing and determination of isoelectric point.</title>
        <authorList>
            <person name="Persechini P.M."/>
            <person name="Young J.D.-E."/>
        </authorList>
    </citation>
    <scope>PROTEIN SEQUENCE OF 21-52; 76-96; 160-187; 255-278; 312-328; 400-420 AND 439-464</scope>
</reference>
<reference key="8">
    <citation type="journal article" date="1989" name="Nature">
        <title>Phosphorylcholine acts as a Ca2+-dependent receptor molecule for lymphocyte perforin.</title>
        <authorList>
            <person name="Tschopp J."/>
            <person name="Schaefer S."/>
            <person name="Masson D."/>
            <person name="Peitsch M.C."/>
            <person name="Heusser C."/>
        </authorList>
    </citation>
    <scope>FUNCTION</scope>
</reference>
<reference key="9">
    <citation type="journal article" date="1991" name="J. Immunol.">
        <title>Subcellular localization of perforin and serine esterase in lymphokine-activated killer cells and cytotoxic T cells by immunogold labeling.</title>
        <authorList>
            <person name="Ojcius D.M."/>
            <person name="Zheng L.M."/>
            <person name="Sphicas E.C."/>
            <person name="Zychlinsky A."/>
            <person name="Young J.D.-E."/>
        </authorList>
    </citation>
    <scope>SUBCELLULAR LOCATION</scope>
    <scope>TISSUE SPECIFICITY</scope>
</reference>
<reference key="10">
    <citation type="journal article" date="1994" name="Nature">
        <title>Cytotoxicity mediated by T cells and natural killer cells is greatly impaired in perforin-deficient mice.</title>
        <authorList>
            <person name="Kagi D."/>
            <person name="Ledermann B."/>
            <person name="Burki K."/>
            <person name="Seiler P."/>
            <person name="Odermatt B."/>
            <person name="Olsen K.J."/>
            <person name="Podack E.R."/>
            <person name="Zinkernagel R.M."/>
            <person name="Hengartner H."/>
        </authorList>
    </citation>
    <scope>FUNCTION</scope>
    <scope>SUBCELLULAR LOCATION</scope>
    <scope>DISRUPTION PHENOTYPE</scope>
</reference>
<reference key="11">
    <citation type="journal article" date="1994" name="Nature">
        <title>Cytolytic T-cell cytotoxicity is mediated through perforin and Fas lytic pathways.</title>
        <authorList>
            <person name="Lowin B."/>
            <person name="Hahne M."/>
            <person name="Mattmann C."/>
            <person name="Tschopp J."/>
        </authorList>
    </citation>
    <scope>FUNCTION</scope>
    <scope>DISRUPTION PHENOTYPE</scope>
</reference>
<reference key="12">
    <citation type="journal article" date="1994" name="Proc. Natl. Acad. Sci. U.S.A.">
        <title>A null mutation in the perforin gene impairs cytolytic T lymphocyte- and natural killer cell-mediated cytotoxicity.</title>
        <authorList>
            <person name="Lowin B."/>
            <person name="Beermann F."/>
            <person name="Schmidt A."/>
            <person name="Tschopp J."/>
        </authorList>
    </citation>
    <scope>FUNCTION</scope>
    <scope>DISRUPTION PHENOTYPE</scope>
</reference>
<reference key="13">
    <citation type="journal article" date="1994" name="Proc. Natl. Acad. Sci. U.S.A.">
        <title>Immune function in mice lacking the perforin gene.</title>
        <authorList>
            <person name="Walsh C.M."/>
            <person name="Matloubian M."/>
            <person name="Liu C.C."/>
            <person name="Ueda R."/>
            <person name="Kurahara C.G."/>
            <person name="Christensen J.L."/>
            <person name="Huang M.T."/>
            <person name="Young J.D."/>
            <person name="Ahmed R."/>
            <person name="Clark W.R."/>
        </authorList>
    </citation>
    <scope>FUNCTION</scope>
    <scope>DISRUPTION PHENOTYPE</scope>
</reference>
<reference key="14">
    <citation type="journal article" date="2009" name="Immunity">
        <title>The molecular basis for perforin oligomerization and transmembrane pore assembly.</title>
        <authorList>
            <person name="Baran K."/>
            <person name="Dunstone M."/>
            <person name="Chia J."/>
            <person name="Ciccone A."/>
            <person name="Browne K.A."/>
            <person name="Clarke C.J.P."/>
            <person name="Lukoyanova N."/>
            <person name="Saibil H."/>
            <person name="Whisstock J.C."/>
            <person name="Voskoboinik I."/>
            <person name="Trapani J.A."/>
        </authorList>
    </citation>
    <scope>SUBUNIT</scope>
    <scope>FUNCTION</scope>
    <scope>SUBCELLULAR LOCATION</scope>
    <scope>MUTAGENESIS OF ASP-191; ARG-213 AND GLU-343</scope>
</reference>
<reference key="15">
    <citation type="journal article" date="2022" name="Nature">
        <title>Caspase-7 activates ASM to repair gasdermin and perforin pores.</title>
        <authorList>
            <person name="Nozaki K."/>
            <person name="Maltez V.I."/>
            <person name="Rayamajhi M."/>
            <person name="Tubbs A.L."/>
            <person name="Mitchell J.E."/>
            <person name="Lacey C.A."/>
            <person name="Harvest C.K."/>
            <person name="Li L."/>
            <person name="Nash W.T."/>
            <person name="Larson H.N."/>
            <person name="McGlaughon B.D."/>
            <person name="Moorman N.J."/>
            <person name="Brown M.G."/>
            <person name="Whitmire J.K."/>
            <person name="Miao E.A."/>
        </authorList>
    </citation>
    <scope>FUNCTION</scope>
</reference>
<reference key="16">
    <citation type="journal article" date="2010" name="Nature">
        <title>The structural basis for membrane binding and pore formation by lymphocyte perforin.</title>
        <authorList>
            <person name="Law R.H."/>
            <person name="Lukoyanova N."/>
            <person name="Voskoboinik I."/>
            <person name="Caradoc-Davies T.T."/>
            <person name="Baran K."/>
            <person name="Dunstone M.A."/>
            <person name="D'Angelo M.E."/>
            <person name="Orlova E.V."/>
            <person name="Coulibaly F."/>
            <person name="Verschoor S."/>
            <person name="Browne K.A."/>
            <person name="Ciccone A."/>
            <person name="Kuiper M.J."/>
            <person name="Bird P.I."/>
            <person name="Trapani J.A."/>
            <person name="Saibil H.R."/>
            <person name="Whisstock J.C."/>
        </authorList>
    </citation>
    <scope>X-RAY CRYSTALLOGRAPHY (2.75 ANGSTROMS) OF 21-554 OF MUTANT GLU-213 IN COMPLEX WITH CALCIUM</scope>
    <scope>COFACTOR</scope>
    <scope>ELECTRON MICROSCOPY OF PORE COMPLEX</scope>
    <scope>FUNCTION</scope>
    <scope>SUBCELLULAR LOCATION</scope>
    <scope>SUBUNIT</scope>
    <scope>GLYCOSYLATION AT ASN-204</scope>
    <scope>DISULFIDE BONDS</scope>
    <scope>CALCIUM-BINDING</scope>
</reference>
<reference evidence="22 23" key="17">
    <citation type="journal article" date="2015" name="J. Biol. Chem.">
        <title>Structural Basis for Ca2+-mediated Interaction of the Perforin C2 Domain with Lipid Membranes.</title>
        <authorList>
            <person name="Yagi H."/>
            <person name="Conroy P.J."/>
            <person name="Leung E.W."/>
            <person name="Law R.H."/>
            <person name="Trapani J.A."/>
            <person name="Voskoboinik I."/>
            <person name="Whisstock J.C."/>
            <person name="Norton R.S."/>
        </authorList>
    </citation>
    <scope>X-RAY CRYSTALLOGRAPHY (1.61 ANGSTROMS) OF 410-535 OF MUTANT 427--ALA-ALA-430 AND ALA-486--488-ALA IN COMPLEX WITH CA(2+)</scope>
    <scope>FUNCTION</scope>
    <scope>COFACTOR</scope>
    <scope>DISULFIDE BONDS</scope>
    <scope>DOMAIN</scope>
    <scope>MUTAGENESIS OF 427-TRP--TYR-430; ASP-429; ASP-435; ASP-483; 486-TYR--TRP-488; ASP-490 AND ASP-491</scope>
</reference>
<reference evidence="24" key="18">
    <citation type="journal article" date="2022" name="Sci. Adv.">
        <title>The pore conformation of lymphocyte perforin.</title>
        <authorList>
            <person name="Ivanova M.E."/>
            <person name="Lukoyanova N."/>
            <person name="Malhotra S."/>
            <person name="Topf M."/>
            <person name="Trapani J.A."/>
            <person name="Voskoboinik I."/>
            <person name="Saibil H.R."/>
        </authorList>
    </citation>
    <scope>STRUCTURE BY ELECTRON MICROSCOPY (4.00 ANGSTROMS) OF 21-554</scope>
    <scope>DOMAIN</scope>
    <scope>FUNCTION</scope>
    <scope>SUBUNIT</scope>
    <scope>COFACTOR</scope>
    <scope>DISULFIDE BONDS</scope>
    <scope>GLYCOSYLATION AT ASN-204</scope>
</reference>
<evidence type="ECO:0000250" key="1">
    <source>
        <dbReference type="UniProtKB" id="P14222"/>
    </source>
</evidence>
<evidence type="ECO:0000255" key="2"/>
<evidence type="ECO:0000255" key="3">
    <source>
        <dbReference type="PROSITE-ProRule" id="PRU00041"/>
    </source>
</evidence>
<evidence type="ECO:0000255" key="4">
    <source>
        <dbReference type="PROSITE-ProRule" id="PRU00745"/>
    </source>
</evidence>
<evidence type="ECO:0000269" key="5">
    <source>
    </source>
</evidence>
<evidence type="ECO:0000269" key="6">
    <source>
    </source>
</evidence>
<evidence type="ECO:0000269" key="7">
    <source>
    </source>
</evidence>
<evidence type="ECO:0000269" key="8">
    <source>
    </source>
</evidence>
<evidence type="ECO:0000269" key="9">
    <source>
    </source>
</evidence>
<evidence type="ECO:0000269" key="10">
    <source>
    </source>
</evidence>
<evidence type="ECO:0000269" key="11">
    <source>
    </source>
</evidence>
<evidence type="ECO:0000269" key="12">
    <source>
    </source>
</evidence>
<evidence type="ECO:0000269" key="13">
    <source>
    </source>
</evidence>
<evidence type="ECO:0000269" key="14">
    <source>
    </source>
</evidence>
<evidence type="ECO:0000269" key="15">
    <source>
    </source>
</evidence>
<evidence type="ECO:0000269" key="16">
    <source>
    </source>
</evidence>
<evidence type="ECO:0000269" key="17">
    <source>
    </source>
</evidence>
<evidence type="ECO:0000303" key="18">
    <source>
    </source>
</evidence>
<evidence type="ECO:0000305" key="19"/>
<evidence type="ECO:0000305" key="20">
    <source>
    </source>
</evidence>
<evidence type="ECO:0007744" key="21">
    <source>
        <dbReference type="PDB" id="3NSJ"/>
    </source>
</evidence>
<evidence type="ECO:0007744" key="22">
    <source>
        <dbReference type="PDB" id="4Y1S"/>
    </source>
</evidence>
<evidence type="ECO:0007744" key="23">
    <source>
        <dbReference type="PDB" id="4Y1T"/>
    </source>
</evidence>
<evidence type="ECO:0007744" key="24">
    <source>
        <dbReference type="PDB" id="7PAG"/>
    </source>
</evidence>
<evidence type="ECO:0007829" key="25">
    <source>
        <dbReference type="PDB" id="3NSJ"/>
    </source>
</evidence>
<evidence type="ECO:0007829" key="26">
    <source>
        <dbReference type="PDB" id="4Y1S"/>
    </source>
</evidence>
<evidence type="ECO:0007829" key="27">
    <source>
        <dbReference type="PDB" id="5UG7"/>
    </source>
</evidence>
<proteinExistence type="evidence at protein level"/>
<feature type="signal peptide" evidence="10 11">
    <location>
        <begin position="1"/>
        <end position="20"/>
    </location>
</feature>
<feature type="chain" id="PRO_0000023610" description="Perforin-1">
    <location>
        <begin position="21"/>
        <end position="554"/>
    </location>
</feature>
<feature type="transmembrane region" description="Beta stranded; Name=CH1" evidence="20">
    <location>
        <begin position="128"/>
        <end position="148"/>
    </location>
</feature>
<feature type="transmembrane region" description="Beta stranded; Name=CH2" evidence="20">
    <location>
        <begin position="256"/>
        <end position="278"/>
    </location>
</feature>
<feature type="domain" description="MACPF" evidence="4">
    <location>
        <begin position="26"/>
        <end position="374"/>
    </location>
</feature>
<feature type="domain" description="EGF-like">
    <location>
        <begin position="375"/>
        <end position="407"/>
    </location>
</feature>
<feature type="domain" description="C2" evidence="3">
    <location>
        <begin position="395"/>
        <end position="513"/>
    </location>
</feature>
<feature type="binding site" evidence="8 23">
    <location>
        <position position="428"/>
    </location>
    <ligand>
        <name>Ca(2+)</name>
        <dbReference type="ChEBI" id="CHEBI:29108"/>
        <label>1</label>
    </ligand>
</feature>
<feature type="binding site" evidence="8 23">
    <location>
        <position position="429"/>
    </location>
    <ligand>
        <name>Ca(2+)</name>
        <dbReference type="ChEBI" id="CHEBI:29108"/>
        <label>1</label>
    </ligand>
</feature>
<feature type="binding site" evidence="8 12 23 24">
    <location>
        <position position="429"/>
    </location>
    <ligand>
        <name>Ca(2+)</name>
        <dbReference type="ChEBI" id="CHEBI:29108"/>
        <label>2</label>
    </ligand>
</feature>
<feature type="binding site" evidence="8 12 23 24">
    <location>
        <position position="429"/>
    </location>
    <ligand>
        <name>Ca(2+)</name>
        <dbReference type="ChEBI" id="CHEBI:29108"/>
        <label>3</label>
    </ligand>
</feature>
<feature type="binding site" evidence="8 23">
    <location>
        <position position="432"/>
    </location>
    <ligand>
        <name>Ca(2+)</name>
        <dbReference type="ChEBI" id="CHEBI:29108"/>
        <label>2</label>
    </ligand>
</feature>
<feature type="binding site" evidence="8 23">
    <location>
        <position position="433"/>
    </location>
    <ligand>
        <name>Ca(2+)</name>
        <dbReference type="ChEBI" id="CHEBI:29108"/>
        <label>2</label>
    </ligand>
</feature>
<feature type="binding site" evidence="8 12 23 24">
    <location>
        <position position="435"/>
    </location>
    <ligand>
        <name>Ca(2+)</name>
        <dbReference type="ChEBI" id="CHEBI:29108"/>
        <label>2</label>
    </ligand>
</feature>
<feature type="binding site" evidence="7 8 12 21 23 24">
    <location>
        <position position="435"/>
    </location>
    <ligand>
        <name>Ca(2+)</name>
        <dbReference type="ChEBI" id="CHEBI:29108"/>
        <label>3</label>
    </ligand>
</feature>
<feature type="binding site" evidence="8 12 23 24">
    <location>
        <position position="454"/>
    </location>
    <ligand>
        <name>Ca(2+)</name>
        <dbReference type="ChEBI" id="CHEBI:29108"/>
        <label>2</label>
    </ligand>
</feature>
<feature type="binding site" evidence="8 23">
    <location>
        <position position="467"/>
    </location>
    <ligand>
        <name>Ca(2+)</name>
        <dbReference type="ChEBI" id="CHEBI:29108"/>
        <label>2</label>
    </ligand>
</feature>
<feature type="binding site" evidence="8 23">
    <location>
        <position position="483"/>
    </location>
    <ligand>
        <name>Ca(2+)</name>
        <dbReference type="ChEBI" id="CHEBI:29108"/>
        <label>1</label>
    </ligand>
</feature>
<feature type="binding site" evidence="7 8 21 23">
    <location>
        <position position="483"/>
    </location>
    <ligand>
        <name>Ca(2+)</name>
        <dbReference type="ChEBI" id="CHEBI:29108"/>
        <label>3</label>
    </ligand>
</feature>
<feature type="binding site" evidence="7 8 12 21 23 24">
    <location>
        <position position="484"/>
    </location>
    <ligand>
        <name>Ca(2+)</name>
        <dbReference type="ChEBI" id="CHEBI:29108"/>
        <label>3</label>
    </ligand>
</feature>
<feature type="binding site" evidence="8 23">
    <location>
        <position position="485"/>
    </location>
    <ligand>
        <name>Ca(2+)</name>
        <dbReference type="ChEBI" id="CHEBI:29108"/>
        <label>1</label>
    </ligand>
</feature>
<feature type="binding site" evidence="8 23">
    <location>
        <position position="485"/>
    </location>
    <ligand>
        <name>Ca(2+)</name>
        <dbReference type="ChEBI" id="CHEBI:29108"/>
        <label>3</label>
    </ligand>
</feature>
<feature type="binding site" evidence="8 23">
    <location>
        <position position="485"/>
    </location>
    <ligand>
        <name>Ca(2+)</name>
        <dbReference type="ChEBI" id="CHEBI:29108"/>
        <label>4</label>
    </ligand>
</feature>
<feature type="binding site" evidence="7 8 21 22">
    <location>
        <position position="485"/>
    </location>
    <ligand>
        <name>Ca(2+)</name>
        <dbReference type="ChEBI" id="CHEBI:29108"/>
        <label>5</label>
    </ligand>
</feature>
<feature type="binding site" evidence="7 21">
    <location>
        <position position="488"/>
    </location>
    <ligand>
        <name>Ca(2+)</name>
        <dbReference type="ChEBI" id="CHEBI:29108"/>
        <label>5</label>
    </ligand>
</feature>
<feature type="binding site" evidence="8 23">
    <location>
        <position position="489"/>
    </location>
    <ligand>
        <name>Ca(2+)</name>
        <dbReference type="ChEBI" id="CHEBI:29108"/>
        <label>4</label>
    </ligand>
</feature>
<feature type="binding site" evidence="7 8 21 22">
    <location>
        <position position="490"/>
    </location>
    <ligand>
        <name>Ca(2+)</name>
        <dbReference type="ChEBI" id="CHEBI:29108"/>
        <label>5</label>
    </ligand>
</feature>
<feature type="binding site" evidence="8 23">
    <location>
        <position position="491"/>
    </location>
    <ligand>
        <name>Ca(2+)</name>
        <dbReference type="ChEBI" id="CHEBI:29108"/>
        <label>1</label>
    </ligand>
</feature>
<feature type="binding site" evidence="8 23">
    <location>
        <position position="491"/>
    </location>
    <ligand>
        <name>Ca(2+)</name>
        <dbReference type="ChEBI" id="CHEBI:29108"/>
        <label>4</label>
    </ligand>
</feature>
<feature type="site" description="Important for oligomerization" evidence="5">
    <location>
        <position position="213"/>
    </location>
</feature>
<feature type="site" description="Important for oligomerization" evidence="5">
    <location>
        <position position="343"/>
    </location>
</feature>
<feature type="glycosylation site" description="N-linked (GlcNAc...) asparagine" evidence="7 12 21 24">
    <location>
        <position position="204"/>
    </location>
</feature>
<feature type="glycosylation site" description="N-linked (GlcNAc...) asparagine" evidence="2">
    <location>
        <position position="375"/>
    </location>
</feature>
<feature type="glycosylation site" description="N-linked (GlcNAc...) asparagine" evidence="2">
    <location>
        <position position="548"/>
    </location>
</feature>
<feature type="disulfide bond" evidence="7 12 24">
    <location>
        <begin position="22"/>
        <end position="75"/>
    </location>
</feature>
<feature type="disulfide bond" evidence="7 12 24">
    <location>
        <begin position="30"/>
        <end position="72"/>
    </location>
</feature>
<feature type="disulfide bond" evidence="7 12 24">
    <location>
        <begin position="101"/>
        <end position="175"/>
    </location>
</feature>
<feature type="disulfide bond" evidence="7 12 24">
    <location>
        <begin position="241"/>
        <end position="407"/>
    </location>
</feature>
<feature type="disulfide bond" evidence="7 12 24">
    <location>
        <begin position="376"/>
        <end position="392"/>
    </location>
</feature>
<feature type="disulfide bond" evidence="7 12 24">
    <location>
        <begin position="380"/>
        <end position="394"/>
    </location>
</feature>
<feature type="disulfide bond" evidence="7 12 24">
    <location>
        <begin position="396"/>
        <end position="406"/>
    </location>
</feature>
<feature type="disulfide bond" evidence="7 8 12 24">
    <location>
        <begin position="496"/>
        <end position="509"/>
    </location>
</feature>
<feature type="disulfide bond" evidence="7 8 12 24">
    <location>
        <begin position="524"/>
        <end position="533"/>
    </location>
</feature>
<feature type="mutagenesis site" description="Loss of cytotoxicity." evidence="5">
    <original>D</original>
    <variation>K</variation>
    <variation>V</variation>
    <location>
        <position position="191"/>
    </location>
</feature>
<feature type="mutagenesis site" description="Strongly decreased cytotoxicity." evidence="5">
    <original>D</original>
    <variation>S</variation>
    <location>
        <position position="191"/>
    </location>
</feature>
<feature type="mutagenesis site" description="Strongly decreased cytotoxicity." evidence="5">
    <original>R</original>
    <variation>E</variation>
    <variation>L</variation>
    <location>
        <position position="213"/>
    </location>
</feature>
<feature type="mutagenesis site" description="Strongly decreased cytotoxicity." evidence="5">
    <original>E</original>
    <variation>R</variation>
    <location>
        <position position="343"/>
    </location>
</feature>
<feature type="mutagenesis site" description="Abolished lipid-binding and pore formation; when associated with 486-A--A-488." evidence="8">
    <original>WGDY</original>
    <variation>AGDA</variation>
    <location>
        <begin position="427"/>
        <end position="430"/>
    </location>
</feature>
<feature type="mutagenesis site" description="Abolished binding of the weakest calcium-binding site, leading to impaired interaction with lipid membranes." evidence="8">
    <original>D</original>
    <variation>N</variation>
    <location>
        <position position="429"/>
    </location>
</feature>
<feature type="mutagenesis site" description="Abolished binding of the weakest calcium-binding site, leading to impaired interaction with lipid membranes." evidence="8">
    <original>D</original>
    <variation>N</variation>
    <location>
        <position position="435"/>
    </location>
</feature>
<feature type="mutagenesis site" description="Abolished binding of the weakest calcium-binding site, leading to impaired interaction with lipid membranes." evidence="8">
    <original>D</original>
    <variation>N</variation>
    <location>
        <position position="483"/>
    </location>
</feature>
<feature type="mutagenesis site" description="Abolished lipid-binding and pore formation; when associated with 427-A--A-430." evidence="8">
    <original>YGW</original>
    <variation>AGA</variation>
    <location>
        <begin position="486"/>
        <end position="488"/>
    </location>
</feature>
<feature type="mutagenesis site" description="Does not affect interaction with lipid membranes." evidence="8">
    <original>D</original>
    <variation>N</variation>
    <location>
        <position position="490"/>
    </location>
</feature>
<feature type="mutagenesis site" description="Decreased calcium-binding." evidence="8">
    <original>D</original>
    <variation>N</variation>
    <location>
        <position position="491"/>
    </location>
</feature>
<feature type="sequence conflict" description="In Ref. 3; CAA31251." evidence="19" ref="3">
    <original>T</original>
    <variation>M</variation>
    <location>
        <position position="3"/>
    </location>
</feature>
<feature type="sequence conflict" description="In Ref. 4; AAA39909." evidence="19" ref="4">
    <original>R</original>
    <variation>P</variation>
    <location>
        <position position="176"/>
    </location>
</feature>
<feature type="sequence conflict" description="In Ref. 3; CAA31251 and 5; CAA42731." evidence="19" ref="3 5">
    <original>G</original>
    <variation>A</variation>
    <location>
        <position position="229"/>
    </location>
</feature>
<feature type="sequence conflict" description="In Ref. 4; AAA39909." evidence="19" ref="4">
    <original>D</original>
    <variation>E</variation>
    <location>
        <position position="435"/>
    </location>
</feature>
<feature type="sequence conflict" description="In Ref. 4; AAA39909." evidence="19" ref="4">
    <original>GDPPGNRS</original>
    <variation>EILQETAC</variation>
    <location>
        <begin position="543"/>
        <end position="550"/>
    </location>
</feature>
<feature type="strand" evidence="25">
    <location>
        <begin position="22"/>
        <end position="25"/>
    </location>
</feature>
<feature type="helix" evidence="25">
    <location>
        <begin position="27"/>
        <end position="31"/>
    </location>
</feature>
<feature type="helix" evidence="25">
    <location>
        <begin position="40"/>
        <end position="42"/>
    </location>
</feature>
<feature type="turn" evidence="25">
    <location>
        <begin position="49"/>
        <end position="51"/>
    </location>
</feature>
<feature type="strand" evidence="25">
    <location>
        <begin position="72"/>
        <end position="76"/>
    </location>
</feature>
<feature type="turn" evidence="25">
    <location>
        <begin position="78"/>
        <end position="82"/>
    </location>
</feature>
<feature type="strand" evidence="25">
    <location>
        <begin position="84"/>
        <end position="87"/>
    </location>
</feature>
<feature type="strand" evidence="25">
    <location>
        <begin position="91"/>
        <end position="96"/>
    </location>
</feature>
<feature type="strand" evidence="25">
    <location>
        <begin position="106"/>
        <end position="110"/>
    </location>
</feature>
<feature type="helix" evidence="25">
    <location>
        <begin position="113"/>
        <end position="121"/>
    </location>
</feature>
<feature type="turn" evidence="25">
    <location>
        <begin position="128"/>
        <end position="131"/>
    </location>
</feature>
<feature type="turn" evidence="25">
    <location>
        <begin position="140"/>
        <end position="143"/>
    </location>
</feature>
<feature type="turn" evidence="25">
    <location>
        <begin position="147"/>
        <end position="150"/>
    </location>
</feature>
<feature type="helix" evidence="25">
    <location>
        <begin position="152"/>
        <end position="163"/>
    </location>
</feature>
<feature type="strand" evidence="25">
    <location>
        <begin position="166"/>
        <end position="182"/>
    </location>
</feature>
<feature type="helix" evidence="25">
    <location>
        <begin position="190"/>
        <end position="197"/>
    </location>
</feature>
<feature type="helix" evidence="25">
    <location>
        <begin position="208"/>
        <end position="218"/>
    </location>
</feature>
<feature type="strand" evidence="25">
    <location>
        <begin position="220"/>
        <end position="239"/>
    </location>
</feature>
<feature type="helix" evidence="25">
    <location>
        <begin position="240"/>
        <end position="245"/>
    </location>
</feature>
<feature type="helix" evidence="25">
    <location>
        <begin position="250"/>
        <end position="264"/>
    </location>
</feature>
<feature type="helix" evidence="25">
    <location>
        <begin position="273"/>
        <end position="284"/>
    </location>
</feature>
<feature type="helix" evidence="25">
    <location>
        <begin position="291"/>
        <end position="294"/>
    </location>
</feature>
<feature type="strand" evidence="25">
    <location>
        <begin position="298"/>
        <end position="305"/>
    </location>
</feature>
<feature type="helix" evidence="25">
    <location>
        <begin position="307"/>
        <end position="309"/>
    </location>
</feature>
<feature type="strand" evidence="25">
    <location>
        <begin position="313"/>
        <end position="315"/>
    </location>
</feature>
<feature type="helix" evidence="25">
    <location>
        <begin position="321"/>
        <end position="330"/>
    </location>
</feature>
<feature type="turn" evidence="25">
    <location>
        <begin position="331"/>
        <end position="333"/>
    </location>
</feature>
<feature type="strand" evidence="25">
    <location>
        <begin position="336"/>
        <end position="344"/>
    </location>
</feature>
<feature type="helix" evidence="25">
    <location>
        <begin position="345"/>
        <end position="348"/>
    </location>
</feature>
<feature type="helix" evidence="25">
    <location>
        <begin position="355"/>
        <end position="369"/>
    </location>
</feature>
<feature type="strand" evidence="25">
    <location>
        <begin position="384"/>
        <end position="386"/>
    </location>
</feature>
<feature type="strand" evidence="25">
    <location>
        <begin position="394"/>
        <end position="397"/>
    </location>
</feature>
<feature type="turn" evidence="25">
    <location>
        <begin position="399"/>
        <end position="401"/>
    </location>
</feature>
<feature type="helix" evidence="25">
    <location>
        <begin position="404"/>
        <end position="406"/>
    </location>
</feature>
<feature type="strand" evidence="25">
    <location>
        <begin position="408"/>
        <end position="410"/>
    </location>
</feature>
<feature type="strand" evidence="26">
    <location>
        <begin position="412"/>
        <end position="424"/>
    </location>
</feature>
<feature type="strand" evidence="27">
    <location>
        <begin position="430"/>
        <end position="432"/>
    </location>
</feature>
<feature type="strand" evidence="26">
    <location>
        <begin position="436"/>
        <end position="442"/>
    </location>
</feature>
<feature type="strand" evidence="26">
    <location>
        <begin position="445"/>
        <end position="448"/>
    </location>
</feature>
<feature type="strand" evidence="26">
    <location>
        <begin position="464"/>
        <end position="470"/>
    </location>
</feature>
<feature type="turn" evidence="26">
    <location>
        <begin position="471"/>
        <end position="473"/>
    </location>
</feature>
<feature type="strand" evidence="26">
    <location>
        <begin position="477"/>
        <end position="483"/>
    </location>
</feature>
<feature type="strand" evidence="27">
    <location>
        <begin position="485"/>
        <end position="487"/>
    </location>
</feature>
<feature type="strand" evidence="26">
    <location>
        <begin position="491"/>
        <end position="498"/>
    </location>
</feature>
<feature type="strand" evidence="26">
    <location>
        <begin position="502"/>
        <end position="510"/>
    </location>
</feature>
<feature type="strand" evidence="26">
    <location>
        <begin position="512"/>
        <end position="524"/>
    </location>
</feature>
<feature type="strand" evidence="25">
    <location>
        <begin position="528"/>
        <end position="530"/>
    </location>
</feature>
<feature type="strand" evidence="25">
    <location>
        <begin position="541"/>
        <end position="543"/>
    </location>
</feature>
<dbReference type="EMBL" id="M23182">
    <property type="protein sequence ID" value="AAA39910.1"/>
    <property type="molecule type" value="mRNA"/>
</dbReference>
<dbReference type="EMBL" id="X51340">
    <property type="protein sequence ID" value="CAA35721.1"/>
    <property type="molecule type" value="Genomic_DNA"/>
</dbReference>
<dbReference type="EMBL" id="X51446">
    <property type="protein sequence ID" value="CAA35721.1"/>
    <property type="status" value="JOINED"/>
    <property type="molecule type" value="Genomic_DNA"/>
</dbReference>
<dbReference type="EMBL" id="X12760">
    <property type="protein sequence ID" value="CAA31251.1"/>
    <property type="molecule type" value="mRNA"/>
</dbReference>
<dbReference type="EMBL" id="J04148">
    <property type="protein sequence ID" value="AAA39909.1"/>
    <property type="molecule type" value="mRNA"/>
</dbReference>
<dbReference type="EMBL" id="X60165">
    <property type="protein sequence ID" value="CAA42731.1"/>
    <property type="molecule type" value="mRNA"/>
</dbReference>
<dbReference type="EMBL" id="M95527">
    <property type="protein sequence ID" value="AAB01574.1"/>
    <property type="molecule type" value="Genomic_DNA"/>
</dbReference>
<dbReference type="CCDS" id="CCDS23875.1"/>
<dbReference type="PIR" id="JL0146">
    <property type="entry name" value="A31300"/>
</dbReference>
<dbReference type="RefSeq" id="NP_035203.3">
    <property type="nucleotide sequence ID" value="NM_011073.3"/>
</dbReference>
<dbReference type="RefSeq" id="XP_006513433.1">
    <property type="nucleotide sequence ID" value="XM_006513370.4"/>
</dbReference>
<dbReference type="PDB" id="3NSJ">
    <property type="method" value="X-ray"/>
    <property type="resolution" value="2.75 A"/>
    <property type="chains" value="A=21-554"/>
</dbReference>
<dbReference type="PDB" id="4Y1S">
    <property type="method" value="X-ray"/>
    <property type="resolution" value="1.61 A"/>
    <property type="chains" value="A=410-535"/>
</dbReference>
<dbReference type="PDB" id="4Y1T">
    <property type="method" value="X-ray"/>
    <property type="resolution" value="2.67 A"/>
    <property type="chains" value="A=410-535"/>
</dbReference>
<dbReference type="PDB" id="5UG6">
    <property type="method" value="X-ray"/>
    <property type="resolution" value="2.00 A"/>
    <property type="chains" value="A=410-535"/>
</dbReference>
<dbReference type="PDB" id="5UG7">
    <property type="method" value="X-ray"/>
    <property type="resolution" value="1.80 A"/>
    <property type="chains" value="A=410-535"/>
</dbReference>
<dbReference type="PDB" id="7PAG">
    <property type="method" value="EM"/>
    <property type="resolution" value="4.00 A"/>
    <property type="chains" value="A=21-554"/>
</dbReference>
<dbReference type="PDBsum" id="3NSJ"/>
<dbReference type="PDBsum" id="4Y1S"/>
<dbReference type="PDBsum" id="4Y1T"/>
<dbReference type="PDBsum" id="5UG6"/>
<dbReference type="PDBsum" id="5UG7"/>
<dbReference type="PDBsum" id="7PAG"/>
<dbReference type="EMDB" id="EMD-13269"/>
<dbReference type="SMR" id="P10820"/>
<dbReference type="BioGRID" id="202128">
    <property type="interactions" value="2"/>
</dbReference>
<dbReference type="DIP" id="DIP-59218N"/>
<dbReference type="FunCoup" id="P10820">
    <property type="interactions" value="346"/>
</dbReference>
<dbReference type="STRING" id="10090.ENSMUSP00000151354"/>
<dbReference type="BindingDB" id="P10820"/>
<dbReference type="ChEMBL" id="CHEMBL5169116"/>
<dbReference type="GlyCosmos" id="P10820">
    <property type="glycosylation" value="3 sites, No reported glycans"/>
</dbReference>
<dbReference type="GlyGen" id="P10820">
    <property type="glycosylation" value="3 sites"/>
</dbReference>
<dbReference type="iPTMnet" id="P10820"/>
<dbReference type="PhosphoSitePlus" id="P10820"/>
<dbReference type="SwissPalm" id="P10820"/>
<dbReference type="PaxDb" id="10090-ENSMUSP00000041483"/>
<dbReference type="ProteomicsDB" id="287675"/>
<dbReference type="Antibodypedia" id="3723">
    <property type="antibodies" value="636 antibodies from 44 providers"/>
</dbReference>
<dbReference type="DNASU" id="18646"/>
<dbReference type="Ensembl" id="ENSMUST00000035419.7">
    <property type="protein sequence ID" value="ENSMUSP00000041483.6"/>
    <property type="gene ID" value="ENSMUSG00000037202.7"/>
</dbReference>
<dbReference type="Ensembl" id="ENSMUST00000219375.2">
    <property type="protein sequence ID" value="ENSMUSP00000151354.2"/>
    <property type="gene ID" value="ENSMUSG00000037202.7"/>
</dbReference>
<dbReference type="GeneID" id="18646"/>
<dbReference type="KEGG" id="mmu:18646"/>
<dbReference type="UCSC" id="uc007ffv.2">
    <property type="organism name" value="mouse"/>
</dbReference>
<dbReference type="AGR" id="MGI:97551"/>
<dbReference type="CTD" id="5551"/>
<dbReference type="MGI" id="MGI:97551">
    <property type="gene designation" value="Prf1"/>
</dbReference>
<dbReference type="VEuPathDB" id="HostDB:ENSMUSG00000037202"/>
<dbReference type="eggNOG" id="ENOG502RQWS">
    <property type="taxonomic scope" value="Eukaryota"/>
</dbReference>
<dbReference type="GeneTree" id="ENSGT00530000063725"/>
<dbReference type="HOGENOM" id="CLU_039516_2_0_1"/>
<dbReference type="InParanoid" id="P10820"/>
<dbReference type="OMA" id="LCKNALQ"/>
<dbReference type="OrthoDB" id="1366754at2759"/>
<dbReference type="PhylomeDB" id="P10820"/>
<dbReference type="TreeFam" id="TF330498"/>
<dbReference type="BioGRID-ORCS" id="18646">
    <property type="hits" value="1 hit in 78 CRISPR screens"/>
</dbReference>
<dbReference type="EvolutionaryTrace" id="P10820"/>
<dbReference type="PRO" id="PR:P10820"/>
<dbReference type="Proteomes" id="UP000000589">
    <property type="component" value="Chromosome 10"/>
</dbReference>
<dbReference type="RNAct" id="P10820">
    <property type="molecule type" value="protein"/>
</dbReference>
<dbReference type="Bgee" id="ENSMUSG00000037202">
    <property type="expression patterns" value="Expressed in gastrula and 38 other cell types or tissues"/>
</dbReference>
<dbReference type="ExpressionAtlas" id="P10820">
    <property type="expression patterns" value="baseline and differential"/>
</dbReference>
<dbReference type="GO" id="GO:0044194">
    <property type="term" value="C:cytolytic granule"/>
    <property type="evidence" value="ECO:0000314"/>
    <property type="project" value="UniProtKB"/>
</dbReference>
<dbReference type="GO" id="GO:0031410">
    <property type="term" value="C:cytoplasmic vesicle"/>
    <property type="evidence" value="ECO:0000314"/>
    <property type="project" value="MGI"/>
</dbReference>
<dbReference type="GO" id="GO:0005829">
    <property type="term" value="C:cytosol"/>
    <property type="evidence" value="ECO:0007669"/>
    <property type="project" value="Ensembl"/>
</dbReference>
<dbReference type="GO" id="GO:0031904">
    <property type="term" value="C:endosome lumen"/>
    <property type="evidence" value="ECO:0007669"/>
    <property type="project" value="UniProtKB-SubCell"/>
</dbReference>
<dbReference type="GO" id="GO:0005576">
    <property type="term" value="C:extracellular region"/>
    <property type="evidence" value="ECO:0007669"/>
    <property type="project" value="UniProtKB-SubCell"/>
</dbReference>
<dbReference type="GO" id="GO:0001772">
    <property type="term" value="C:immunological synapse"/>
    <property type="evidence" value="ECO:0000314"/>
    <property type="project" value="UniProt"/>
</dbReference>
<dbReference type="GO" id="GO:0016020">
    <property type="term" value="C:membrane"/>
    <property type="evidence" value="ECO:0000314"/>
    <property type="project" value="UniProtKB"/>
</dbReference>
<dbReference type="GO" id="GO:0005886">
    <property type="term" value="C:plasma membrane"/>
    <property type="evidence" value="ECO:0000314"/>
    <property type="project" value="UniProt"/>
</dbReference>
<dbReference type="GO" id="GO:0005509">
    <property type="term" value="F:calcium ion binding"/>
    <property type="evidence" value="ECO:0000314"/>
    <property type="project" value="UniProtKB"/>
</dbReference>
<dbReference type="GO" id="GO:0042802">
    <property type="term" value="F:identical protein binding"/>
    <property type="evidence" value="ECO:0007669"/>
    <property type="project" value="Ensembl"/>
</dbReference>
<dbReference type="GO" id="GO:0140911">
    <property type="term" value="F:pore-forming activity"/>
    <property type="evidence" value="ECO:0007669"/>
    <property type="project" value="InterPro"/>
</dbReference>
<dbReference type="GO" id="GO:0022829">
    <property type="term" value="F:wide pore channel activity"/>
    <property type="evidence" value="ECO:0000314"/>
    <property type="project" value="UniProtKB"/>
</dbReference>
<dbReference type="GO" id="GO:0002357">
    <property type="term" value="P:defense response to tumor cell"/>
    <property type="evidence" value="ECO:0000315"/>
    <property type="project" value="UniProtKB"/>
</dbReference>
<dbReference type="GO" id="GO:0051607">
    <property type="term" value="P:defense response to virus"/>
    <property type="evidence" value="ECO:0000315"/>
    <property type="project" value="UniProtKB"/>
</dbReference>
<dbReference type="GO" id="GO:0140507">
    <property type="term" value="P:granzyme-mediated programmed cell death signaling pathway"/>
    <property type="evidence" value="ECO:0000314"/>
    <property type="project" value="UniProt"/>
</dbReference>
<dbReference type="GO" id="GO:0002418">
    <property type="term" value="P:immune response to tumor cell"/>
    <property type="evidence" value="ECO:0000315"/>
    <property type="project" value="UniProtKB"/>
</dbReference>
<dbReference type="GO" id="GO:0001771">
    <property type="term" value="P:immunological synapse formation"/>
    <property type="evidence" value="ECO:0007669"/>
    <property type="project" value="Ensembl"/>
</dbReference>
<dbReference type="GO" id="GO:0031640">
    <property type="term" value="P:killing of cells of another organism"/>
    <property type="evidence" value="ECO:0007669"/>
    <property type="project" value="UniProtKB-KW"/>
</dbReference>
<dbReference type="GO" id="GO:0051712">
    <property type="term" value="P:positive regulation of killing of cells of another organism"/>
    <property type="evidence" value="ECO:0007669"/>
    <property type="project" value="Ensembl"/>
</dbReference>
<dbReference type="GO" id="GO:0051260">
    <property type="term" value="P:protein homooligomerization"/>
    <property type="evidence" value="ECO:0000314"/>
    <property type="project" value="UniProtKB"/>
</dbReference>
<dbReference type="GO" id="GO:0017038">
    <property type="term" value="P:protein import"/>
    <property type="evidence" value="ECO:0000314"/>
    <property type="project" value="UniProt"/>
</dbReference>
<dbReference type="GO" id="GO:0009306">
    <property type="term" value="P:protein secretion"/>
    <property type="evidence" value="ECO:0000314"/>
    <property type="project" value="UniProt"/>
</dbReference>
<dbReference type="GO" id="GO:0071806">
    <property type="term" value="P:protein transmembrane transport"/>
    <property type="evidence" value="ECO:0000314"/>
    <property type="project" value="UniProt"/>
</dbReference>
<dbReference type="GO" id="GO:0001913">
    <property type="term" value="P:T cell mediated cytotoxicity"/>
    <property type="evidence" value="ECO:0000314"/>
    <property type="project" value="MGI"/>
</dbReference>
<dbReference type="CDD" id="cd04032">
    <property type="entry name" value="C2_Perforin"/>
    <property type="match status" value="1"/>
</dbReference>
<dbReference type="FunFam" id="2.60.40.150:FF:000216">
    <property type="entry name" value="Perforin-1 precursor"/>
    <property type="match status" value="1"/>
</dbReference>
<dbReference type="Gene3D" id="2.60.40.150">
    <property type="entry name" value="C2 domain"/>
    <property type="match status" value="1"/>
</dbReference>
<dbReference type="InterPro" id="IPR000008">
    <property type="entry name" value="C2_dom"/>
</dbReference>
<dbReference type="InterPro" id="IPR035892">
    <property type="entry name" value="C2_domain_sf"/>
</dbReference>
<dbReference type="InterPro" id="IPR020864">
    <property type="entry name" value="MACPF"/>
</dbReference>
<dbReference type="InterPro" id="IPR020863">
    <property type="entry name" value="MACPF_CS"/>
</dbReference>
<dbReference type="InterPro" id="IPR037300">
    <property type="entry name" value="Perforin-1_C2"/>
</dbReference>
<dbReference type="InterPro" id="IPR052784">
    <property type="entry name" value="Perforin-1_pore-forming"/>
</dbReference>
<dbReference type="PANTHER" id="PTHR46096">
    <property type="entry name" value="PERFORIN-1"/>
    <property type="match status" value="1"/>
</dbReference>
<dbReference type="PANTHER" id="PTHR46096:SF3">
    <property type="entry name" value="PERFORIN-1"/>
    <property type="match status" value="1"/>
</dbReference>
<dbReference type="Pfam" id="PF00168">
    <property type="entry name" value="C2"/>
    <property type="match status" value="1"/>
</dbReference>
<dbReference type="Pfam" id="PF01823">
    <property type="entry name" value="MACPF"/>
    <property type="match status" value="1"/>
</dbReference>
<dbReference type="SMART" id="SM00239">
    <property type="entry name" value="C2"/>
    <property type="match status" value="1"/>
</dbReference>
<dbReference type="SMART" id="SM00457">
    <property type="entry name" value="MACPF"/>
    <property type="match status" value="1"/>
</dbReference>
<dbReference type="SUPFAM" id="SSF49562">
    <property type="entry name" value="C2 domain (Calcium/lipid-binding domain, CaLB)"/>
    <property type="match status" value="1"/>
</dbReference>
<dbReference type="PROSITE" id="PS50004">
    <property type="entry name" value="C2"/>
    <property type="match status" value="1"/>
</dbReference>
<dbReference type="PROSITE" id="PS00279">
    <property type="entry name" value="MACPF_1"/>
    <property type="match status" value="1"/>
</dbReference>
<dbReference type="PROSITE" id="PS51412">
    <property type="entry name" value="MACPF_2"/>
    <property type="match status" value="1"/>
</dbReference>
<sequence>MATCLFLLGLFLLLPRPVPAPCYTATRSECKQKHKFVPGVWMAGEGMDVTTLRRSGSFPVNTQRFLRPDRTCTLCKNSLMRDATQRLPVAITHWRPHSSHCQRNVAAAKVHSTEGVAREAAANINNDWRVGLDVNPRPEANMRASVAGSHSKVANFAAEKTYQDQYNFNSDTVECRMYSFRLVQKPPLHLDFKKALRALPRNFNSSTEHAYHRLISSYGTHFITAVDLGGRISVLTALRTCQLTLNGLTADEVGDCLNVEAQVSIGAQASVSSEYKACEEKKKQHKMATSFHQTYRERHVEVLGGPLDSTHDLLFGNQATPEQFSTWTASLPSNPGLVDYSLEPLHTLLEEQNPKREALRQAISHYIMSRARWQNCSRPCRSGQHKSSHDSCQCECQDSKVTNQDCCPRQRGLAHLVVSNFRAEHLWGDYTTATDAYLKVFFGGQEFRTGVVWNNNNPRWTDKMDFENVLLSTGGPLRVQVWDADYGWDDDLLGSCDRSPHSGFHEVTCELNHGRVKFSYHAKCLPHLTGGTCLEYAPQGLLGDPPGNRSGAVW</sequence>
<organism>
    <name type="scientific">Mus musculus</name>
    <name type="common">Mouse</name>
    <dbReference type="NCBI Taxonomy" id="10090"/>
    <lineage>
        <taxon>Eukaryota</taxon>
        <taxon>Metazoa</taxon>
        <taxon>Chordata</taxon>
        <taxon>Craniata</taxon>
        <taxon>Vertebrata</taxon>
        <taxon>Euteleostomi</taxon>
        <taxon>Mammalia</taxon>
        <taxon>Eutheria</taxon>
        <taxon>Euarchontoglires</taxon>
        <taxon>Glires</taxon>
        <taxon>Rodentia</taxon>
        <taxon>Myomorpha</taxon>
        <taxon>Muroidea</taxon>
        <taxon>Muridae</taxon>
        <taxon>Murinae</taxon>
        <taxon>Mus</taxon>
        <taxon>Mus</taxon>
    </lineage>
</organism>
<accession>P10820</accession>